<feature type="chain" id="PRO_0000238519" description="mRNA 3'-end-processing protein rna14">
    <location>
        <begin position="1"/>
        <end position="1078"/>
    </location>
</feature>
<feature type="repeat" description="HAT 1">
    <location>
        <begin position="280"/>
        <end position="312"/>
    </location>
</feature>
<feature type="repeat" description="HAT 2">
    <location>
        <begin position="314"/>
        <end position="345"/>
    </location>
</feature>
<feature type="repeat" description="HAT 3">
    <location>
        <begin position="356"/>
        <end position="391"/>
    </location>
</feature>
<feature type="repeat" description="HAT 4">
    <location>
        <begin position="405"/>
        <end position="438"/>
    </location>
</feature>
<feature type="repeat" description="HAT 5">
    <location>
        <begin position="475"/>
        <end position="508"/>
    </location>
</feature>
<feature type="repeat" description="HAT 6">
    <location>
        <begin position="520"/>
        <end position="552"/>
    </location>
</feature>
<feature type="region of interest" description="Disordered" evidence="2">
    <location>
        <begin position="15"/>
        <end position="209"/>
    </location>
</feature>
<feature type="region of interest" description="Disordered" evidence="2">
    <location>
        <begin position="222"/>
        <end position="251"/>
    </location>
</feature>
<feature type="region of interest" description="Disordered" evidence="2">
    <location>
        <begin position="632"/>
        <end position="663"/>
    </location>
</feature>
<feature type="region of interest" description="Disordered" evidence="2">
    <location>
        <begin position="851"/>
        <end position="950"/>
    </location>
</feature>
<feature type="compositionally biased region" description="Polar residues" evidence="2">
    <location>
        <begin position="42"/>
        <end position="55"/>
    </location>
</feature>
<feature type="compositionally biased region" description="Low complexity" evidence="2">
    <location>
        <begin position="58"/>
        <end position="68"/>
    </location>
</feature>
<feature type="compositionally biased region" description="Polar residues" evidence="2">
    <location>
        <begin position="82"/>
        <end position="115"/>
    </location>
</feature>
<feature type="compositionally biased region" description="Acidic residues" evidence="2">
    <location>
        <begin position="126"/>
        <end position="139"/>
    </location>
</feature>
<feature type="compositionally biased region" description="Polar residues" evidence="2">
    <location>
        <begin position="151"/>
        <end position="170"/>
    </location>
</feature>
<feature type="compositionally biased region" description="Polar residues" evidence="2">
    <location>
        <begin position="190"/>
        <end position="206"/>
    </location>
</feature>
<feature type="compositionally biased region" description="Polar residues" evidence="2">
    <location>
        <begin position="879"/>
        <end position="894"/>
    </location>
</feature>
<feature type="compositionally biased region" description="Basic and acidic residues" evidence="2">
    <location>
        <begin position="896"/>
        <end position="907"/>
    </location>
</feature>
<feature type="compositionally biased region" description="Polar residues" evidence="2">
    <location>
        <begin position="931"/>
        <end position="949"/>
    </location>
</feature>
<evidence type="ECO:0000250" key="1"/>
<evidence type="ECO:0000256" key="2">
    <source>
        <dbReference type="SAM" id="MobiDB-lite"/>
    </source>
</evidence>
<dbReference type="EMBL" id="BA000050">
    <property type="protein sequence ID" value="BAE57807.1"/>
    <property type="molecule type" value="Genomic_DNA"/>
</dbReference>
<dbReference type="SMR" id="Q2UKV8"/>
<dbReference type="STRING" id="510516.Q2UKV8"/>
<dbReference type="EnsemblFungi" id="BAE57807">
    <property type="protein sequence ID" value="BAE57807"/>
    <property type="gene ID" value="AO090003000655"/>
</dbReference>
<dbReference type="HOGENOM" id="CLU_007630_1_1_1"/>
<dbReference type="OMA" id="VQLWSVY"/>
<dbReference type="Proteomes" id="UP000006564">
    <property type="component" value="Chromosome 2"/>
</dbReference>
<dbReference type="GO" id="GO:0005737">
    <property type="term" value="C:cytoplasm"/>
    <property type="evidence" value="ECO:0007669"/>
    <property type="project" value="UniProtKB-SubCell"/>
</dbReference>
<dbReference type="GO" id="GO:0005634">
    <property type="term" value="C:nucleus"/>
    <property type="evidence" value="ECO:0007669"/>
    <property type="project" value="UniProtKB-SubCell"/>
</dbReference>
<dbReference type="GO" id="GO:0003729">
    <property type="term" value="F:mRNA binding"/>
    <property type="evidence" value="ECO:0007669"/>
    <property type="project" value="TreeGrafter"/>
</dbReference>
<dbReference type="GO" id="GO:0031124">
    <property type="term" value="P:mRNA 3'-end processing"/>
    <property type="evidence" value="ECO:0007669"/>
    <property type="project" value="InterPro"/>
</dbReference>
<dbReference type="FunFam" id="1.25.40.1040:FF:000006">
    <property type="entry name" value="CFIA complex component Rna14, putative"/>
    <property type="match status" value="1"/>
</dbReference>
<dbReference type="Gene3D" id="1.25.40.1040">
    <property type="match status" value="1"/>
</dbReference>
<dbReference type="InterPro" id="IPR003107">
    <property type="entry name" value="HAT"/>
</dbReference>
<dbReference type="InterPro" id="IPR045243">
    <property type="entry name" value="Rna14-like"/>
</dbReference>
<dbReference type="InterPro" id="IPR008847">
    <property type="entry name" value="Suf"/>
</dbReference>
<dbReference type="InterPro" id="IPR011990">
    <property type="entry name" value="TPR-like_helical_dom_sf"/>
</dbReference>
<dbReference type="PANTHER" id="PTHR19980:SF0">
    <property type="entry name" value="CLEAVAGE STIMULATION FACTOR SUBUNIT 3"/>
    <property type="match status" value="1"/>
</dbReference>
<dbReference type="PANTHER" id="PTHR19980">
    <property type="entry name" value="RNA CLEAVAGE STIMULATION FACTOR"/>
    <property type="match status" value="1"/>
</dbReference>
<dbReference type="Pfam" id="PF05843">
    <property type="entry name" value="Suf"/>
    <property type="match status" value="1"/>
</dbReference>
<dbReference type="SMART" id="SM00386">
    <property type="entry name" value="HAT"/>
    <property type="match status" value="5"/>
</dbReference>
<dbReference type="SUPFAM" id="SSF48452">
    <property type="entry name" value="TPR-like"/>
    <property type="match status" value="2"/>
</dbReference>
<proteinExistence type="inferred from homology"/>
<comment type="function">
    <text evidence="1">Component of the cleavage factor IA (CFIA) complex, which is involved in the endonucleolytic cleavage during polyadenylation-dependent pre-mRNA 3'-end formation.</text>
</comment>
<comment type="subcellular location">
    <subcellularLocation>
        <location evidence="1">Nucleus</location>
    </subcellularLocation>
    <subcellularLocation>
        <location evidence="1">Cytoplasm</location>
    </subcellularLocation>
    <text evidence="1">Nucleus and/or cytoplasm.</text>
</comment>
<keyword id="KW-0963">Cytoplasm</keyword>
<keyword id="KW-0507">mRNA processing</keyword>
<keyword id="KW-0539">Nucleus</keyword>
<keyword id="KW-1185">Reference proteome</keyword>
<keyword id="KW-0677">Repeat</keyword>
<accession>Q2UKV8</accession>
<sequence length="1078" mass="120945">MAEDDAEKAFFQAQAMNADSVDYKAVEDQGASSDSDDYDPSKTLQDQYSASILDSKQSEIAPSSASPSDPNPPTQSIPPETDPSQPADSAYPSQTPSRADSQASVSAPASGTSVPLKTRTIGGFVVEDEDEDDAGDADYEPPAVLGVEDMNTISMNVPQQPISGNANEDTPTPDVSMDGAVQASADAKNFPNSSYTPASAAASKSDTPALLSQDMYNSRTLQSENMQDSAAATPVPDSPSTSKGRLPHDRVGILEDRIQEDPRGDIPAWLELINEHRNRNRIDSAREVYERFLTAFPFSAEQWVAYATMESELNELYRLEQIFNRTLLTIPDVQLWTVYLDYVRRRNPLTTDTTGQSRRIISSAYDLALQYVGVDKDSGSIWTDYVQFIRSGPGNVGGSGWQDQQKMDLLRKAYQKAICVPTQAVNNLWKEYDQFEMGLNKLTGRKFLQEQSPAYMTARSSYTELQNITRDLNRTTLPRLPPVLGSDGDIEFGQQVDIWKRWIKWEKGDPLVLKEEDQAAFKARVIYVYKQALMALRFLPEIWFEAAEFCFLNDMENEGNEFLKNGIEANPESCLLAFKRADRLEITSESEQDPIKRGAKVREPYDKLLNALYDLIAKARTRESQDVARLEETFAKINPDTQPSKTDDDDDDQSDSKARESMKNAQIEALRNAHAIQIGILSKTVSFAWIALMRAMRRIQGKGKPGEMPGSRQVFADARKRGRITSDVYIASALIEYHCYKDPAATKIFERGAKLFPEDENFALEYLKHLIDINDVINARAVFEMTVRKLASNPENVHKTKPIFAFLHEYESRYGDLVQVINLENRMRELFPEDPTLEQFAHRYSSPAFDPTVVRPIISPSQTRPKTAFPTEQPVSRHGTPSSRYPDASVTNSPKRPLEDFDDEMNRPRKFIRADSPLKTTQRRQLDPPKRTQQVISNQTGSQFRSQGSPAPLPRDIVYLLSIIPSASAYNAGRFSPEKLVDLIRRIDMPTSISQIPLPPSVRGLGFPEMSICLWGRLPSTTWPKTVHPCGKPTFIALSSITRVKCKRFTGWRSPYIRKPSLPPYGTYSPSLAFLISV</sequence>
<name>RNA14_ASPOR</name>
<protein>
    <recommendedName>
        <fullName>mRNA 3'-end-processing protein rna14</fullName>
    </recommendedName>
</protein>
<gene>
    <name type="primary">rna14</name>
    <name type="ORF">AO090003000655</name>
</gene>
<reference key="1">
    <citation type="journal article" date="2005" name="Nature">
        <title>Genome sequencing and analysis of Aspergillus oryzae.</title>
        <authorList>
            <person name="Machida M."/>
            <person name="Asai K."/>
            <person name="Sano M."/>
            <person name="Tanaka T."/>
            <person name="Kumagai T."/>
            <person name="Terai G."/>
            <person name="Kusumoto K."/>
            <person name="Arima T."/>
            <person name="Akita O."/>
            <person name="Kashiwagi Y."/>
            <person name="Abe K."/>
            <person name="Gomi K."/>
            <person name="Horiuchi H."/>
            <person name="Kitamoto K."/>
            <person name="Kobayashi T."/>
            <person name="Takeuchi M."/>
            <person name="Denning D.W."/>
            <person name="Galagan J.E."/>
            <person name="Nierman W.C."/>
            <person name="Yu J."/>
            <person name="Archer D.B."/>
            <person name="Bennett J.W."/>
            <person name="Bhatnagar D."/>
            <person name="Cleveland T.E."/>
            <person name="Fedorova N.D."/>
            <person name="Gotoh O."/>
            <person name="Horikawa H."/>
            <person name="Hosoyama A."/>
            <person name="Ichinomiya M."/>
            <person name="Igarashi R."/>
            <person name="Iwashita K."/>
            <person name="Juvvadi P.R."/>
            <person name="Kato M."/>
            <person name="Kato Y."/>
            <person name="Kin T."/>
            <person name="Kokubun A."/>
            <person name="Maeda H."/>
            <person name="Maeyama N."/>
            <person name="Maruyama J."/>
            <person name="Nagasaki H."/>
            <person name="Nakajima T."/>
            <person name="Oda K."/>
            <person name="Okada K."/>
            <person name="Paulsen I."/>
            <person name="Sakamoto K."/>
            <person name="Sawano T."/>
            <person name="Takahashi M."/>
            <person name="Takase K."/>
            <person name="Terabayashi Y."/>
            <person name="Wortman J.R."/>
            <person name="Yamada O."/>
            <person name="Yamagata Y."/>
            <person name="Anazawa H."/>
            <person name="Hata Y."/>
            <person name="Koide Y."/>
            <person name="Komori T."/>
            <person name="Koyama Y."/>
            <person name="Minetoki T."/>
            <person name="Suharnan S."/>
            <person name="Tanaka A."/>
            <person name="Isono K."/>
            <person name="Kuhara S."/>
            <person name="Ogasawara N."/>
            <person name="Kikuchi H."/>
        </authorList>
    </citation>
    <scope>NUCLEOTIDE SEQUENCE [LARGE SCALE GENOMIC DNA]</scope>
    <source>
        <strain>ATCC 42149 / RIB 40</strain>
    </source>
</reference>
<organism>
    <name type="scientific">Aspergillus oryzae (strain ATCC 42149 / RIB 40)</name>
    <name type="common">Yellow koji mold</name>
    <dbReference type="NCBI Taxonomy" id="510516"/>
    <lineage>
        <taxon>Eukaryota</taxon>
        <taxon>Fungi</taxon>
        <taxon>Dikarya</taxon>
        <taxon>Ascomycota</taxon>
        <taxon>Pezizomycotina</taxon>
        <taxon>Eurotiomycetes</taxon>
        <taxon>Eurotiomycetidae</taxon>
        <taxon>Eurotiales</taxon>
        <taxon>Aspergillaceae</taxon>
        <taxon>Aspergillus</taxon>
        <taxon>Aspergillus subgen. Circumdati</taxon>
    </lineage>
</organism>